<name>KDGR_BACSU</name>
<organism>
    <name type="scientific">Bacillus subtilis (strain 168)</name>
    <dbReference type="NCBI Taxonomy" id="224308"/>
    <lineage>
        <taxon>Bacteria</taxon>
        <taxon>Bacillati</taxon>
        <taxon>Bacillota</taxon>
        <taxon>Bacilli</taxon>
        <taxon>Bacillales</taxon>
        <taxon>Bacillaceae</taxon>
        <taxon>Bacillus</taxon>
    </lineage>
</organism>
<keyword id="KW-0238">DNA-binding</keyword>
<keyword id="KW-1185">Reference proteome</keyword>
<keyword id="KW-0678">Repressor</keyword>
<keyword id="KW-0804">Transcription</keyword>
<keyword id="KW-0805">Transcription regulation</keyword>
<reference key="1">
    <citation type="journal article" date="1996" name="Microbiology">
        <title>Sequence analysis of the Bacillus subtilis chromosome region between the serA and kdg loci cloned in a yeast artificial chromosome.</title>
        <authorList>
            <person name="Sorokin A.V."/>
            <person name="Azevedo V."/>
            <person name="Zumstein E."/>
            <person name="Galleron N."/>
            <person name="Ehrlich S.D."/>
            <person name="Serror P."/>
        </authorList>
    </citation>
    <scope>NUCLEOTIDE SEQUENCE [GENOMIC DNA]</scope>
    <source>
        <strain>168 / Marburg / ATCC 6051 / DSM 10 / JCM 1465 / NBRC 13719 / NCIMB 3610 / NRRL NRS-744 / VKM B-501</strain>
    </source>
</reference>
<reference key="2">
    <citation type="journal article" date="1997" name="Nature">
        <title>The complete genome sequence of the Gram-positive bacterium Bacillus subtilis.</title>
        <authorList>
            <person name="Kunst F."/>
            <person name="Ogasawara N."/>
            <person name="Moszer I."/>
            <person name="Albertini A.M."/>
            <person name="Alloni G."/>
            <person name="Azevedo V."/>
            <person name="Bertero M.G."/>
            <person name="Bessieres P."/>
            <person name="Bolotin A."/>
            <person name="Borchert S."/>
            <person name="Borriss R."/>
            <person name="Boursier L."/>
            <person name="Brans A."/>
            <person name="Braun M."/>
            <person name="Brignell S.C."/>
            <person name="Bron S."/>
            <person name="Brouillet S."/>
            <person name="Bruschi C.V."/>
            <person name="Caldwell B."/>
            <person name="Capuano V."/>
            <person name="Carter N.M."/>
            <person name="Choi S.-K."/>
            <person name="Codani J.-J."/>
            <person name="Connerton I.F."/>
            <person name="Cummings N.J."/>
            <person name="Daniel R.A."/>
            <person name="Denizot F."/>
            <person name="Devine K.M."/>
            <person name="Duesterhoeft A."/>
            <person name="Ehrlich S.D."/>
            <person name="Emmerson P.T."/>
            <person name="Entian K.-D."/>
            <person name="Errington J."/>
            <person name="Fabret C."/>
            <person name="Ferrari E."/>
            <person name="Foulger D."/>
            <person name="Fritz C."/>
            <person name="Fujita M."/>
            <person name="Fujita Y."/>
            <person name="Fuma S."/>
            <person name="Galizzi A."/>
            <person name="Galleron N."/>
            <person name="Ghim S.-Y."/>
            <person name="Glaser P."/>
            <person name="Goffeau A."/>
            <person name="Golightly E.J."/>
            <person name="Grandi G."/>
            <person name="Guiseppi G."/>
            <person name="Guy B.J."/>
            <person name="Haga K."/>
            <person name="Haiech J."/>
            <person name="Harwood C.R."/>
            <person name="Henaut A."/>
            <person name="Hilbert H."/>
            <person name="Holsappel S."/>
            <person name="Hosono S."/>
            <person name="Hullo M.-F."/>
            <person name="Itaya M."/>
            <person name="Jones L.-M."/>
            <person name="Joris B."/>
            <person name="Karamata D."/>
            <person name="Kasahara Y."/>
            <person name="Klaerr-Blanchard M."/>
            <person name="Klein C."/>
            <person name="Kobayashi Y."/>
            <person name="Koetter P."/>
            <person name="Koningstein G."/>
            <person name="Krogh S."/>
            <person name="Kumano M."/>
            <person name="Kurita K."/>
            <person name="Lapidus A."/>
            <person name="Lardinois S."/>
            <person name="Lauber J."/>
            <person name="Lazarevic V."/>
            <person name="Lee S.-M."/>
            <person name="Levine A."/>
            <person name="Liu H."/>
            <person name="Masuda S."/>
            <person name="Mauel C."/>
            <person name="Medigue C."/>
            <person name="Medina N."/>
            <person name="Mellado R.P."/>
            <person name="Mizuno M."/>
            <person name="Moestl D."/>
            <person name="Nakai S."/>
            <person name="Noback M."/>
            <person name="Noone D."/>
            <person name="O'Reilly M."/>
            <person name="Ogawa K."/>
            <person name="Ogiwara A."/>
            <person name="Oudega B."/>
            <person name="Park S.-H."/>
            <person name="Parro V."/>
            <person name="Pohl T.M."/>
            <person name="Portetelle D."/>
            <person name="Porwollik S."/>
            <person name="Prescott A.M."/>
            <person name="Presecan E."/>
            <person name="Pujic P."/>
            <person name="Purnelle B."/>
            <person name="Rapoport G."/>
            <person name="Rey M."/>
            <person name="Reynolds S."/>
            <person name="Rieger M."/>
            <person name="Rivolta C."/>
            <person name="Rocha E."/>
            <person name="Roche B."/>
            <person name="Rose M."/>
            <person name="Sadaie Y."/>
            <person name="Sato T."/>
            <person name="Scanlan E."/>
            <person name="Schleich S."/>
            <person name="Schroeter R."/>
            <person name="Scoffone F."/>
            <person name="Sekiguchi J."/>
            <person name="Sekowska A."/>
            <person name="Seror S.J."/>
            <person name="Serror P."/>
            <person name="Shin B.-S."/>
            <person name="Soldo B."/>
            <person name="Sorokin A."/>
            <person name="Tacconi E."/>
            <person name="Takagi T."/>
            <person name="Takahashi H."/>
            <person name="Takemaru K."/>
            <person name="Takeuchi M."/>
            <person name="Tamakoshi A."/>
            <person name="Tanaka T."/>
            <person name="Terpstra P."/>
            <person name="Tognoni A."/>
            <person name="Tosato V."/>
            <person name="Uchiyama S."/>
            <person name="Vandenbol M."/>
            <person name="Vannier F."/>
            <person name="Vassarotti A."/>
            <person name="Viari A."/>
            <person name="Wambutt R."/>
            <person name="Wedler E."/>
            <person name="Wedler H."/>
            <person name="Weitzenegger T."/>
            <person name="Winters P."/>
            <person name="Wipat A."/>
            <person name="Yamamoto H."/>
            <person name="Yamane K."/>
            <person name="Yasumoto K."/>
            <person name="Yata K."/>
            <person name="Yoshida K."/>
            <person name="Yoshikawa H.-F."/>
            <person name="Zumstein E."/>
            <person name="Yoshikawa H."/>
            <person name="Danchin A."/>
        </authorList>
    </citation>
    <scope>NUCLEOTIDE SEQUENCE [LARGE SCALE GENOMIC DNA]</scope>
    <source>
        <strain>168</strain>
    </source>
</reference>
<reference key="3">
    <citation type="journal article" date="1998" name="Microbiology">
        <title>The kdgRKAT operon of Bacillus subtilis: detection of the transcript and regulation by the kdgR and ccpA genes.</title>
        <authorList>
            <person name="Pujic P."/>
            <person name="Dervyn R."/>
            <person name="Sorokin A."/>
            <person name="Ehrlich S.D."/>
        </authorList>
    </citation>
    <scope>FUNCTION IN REGULATION OF KDGRKAT EXPRESSION</scope>
    <scope>INDUCTION</scope>
    <source>
        <strain>168</strain>
    </source>
</reference>
<reference key="4">
    <citation type="journal article" date="2007" name="Microbiology">
        <title>Regulation of the kduID operon of Bacillus subtilis by the KdgR repressor and the ccpA gene: identification of two KdgR-binding sites within the kdgR-kduI intergenic region.</title>
        <authorList>
            <person name="Lin J.S."/>
            <person name="Shaw G.C."/>
        </authorList>
    </citation>
    <scope>FUNCTION IN REGULATION OF KDUID EXPRESSION</scope>
    <scope>DNA-BINDING</scope>
    <source>
        <strain>168</strain>
    </source>
</reference>
<accession>P50844</accession>
<proteinExistence type="evidence at protein level"/>
<protein>
    <recommendedName>
        <fullName>HTH-type transcriptional regulator KdgR</fullName>
    </recommendedName>
    <alternativeName>
        <fullName>Kdg operon repressor</fullName>
    </alternativeName>
</protein>
<comment type="function">
    <text evidence="2 3">Transcriptional repressor of the kdgRKAT and kduID operons for pectin utilization.</text>
</comment>
<comment type="induction">
    <text evidence="3">Induced by galacturonate and negatively regulated by itself. Is subject to catabolite repression by glucose involving the ccpA gene.</text>
</comment>
<feature type="chain" id="PRO_0000107961" description="HTH-type transcriptional regulator KdgR">
    <location>
        <begin position="1"/>
        <end position="339"/>
    </location>
</feature>
<feature type="domain" description="HTH lacI-type" evidence="1">
    <location>
        <begin position="9"/>
        <end position="64"/>
    </location>
</feature>
<feature type="DNA-binding region" description="H-T-H motif" evidence="1">
    <location>
        <begin position="11"/>
        <end position="30"/>
    </location>
</feature>
<evidence type="ECO:0000255" key="1">
    <source>
        <dbReference type="PROSITE-ProRule" id="PRU00111"/>
    </source>
</evidence>
<evidence type="ECO:0000269" key="2">
    <source>
    </source>
</evidence>
<evidence type="ECO:0000269" key="3">
    <source>
    </source>
</evidence>
<dbReference type="EMBL" id="L47838">
    <property type="protein sequence ID" value="AAB38478.1"/>
    <property type="molecule type" value="Genomic_DNA"/>
</dbReference>
<dbReference type="EMBL" id="AL009126">
    <property type="protein sequence ID" value="CAB14129.1"/>
    <property type="molecule type" value="Genomic_DNA"/>
</dbReference>
<dbReference type="PIR" id="B69648">
    <property type="entry name" value="B69648"/>
</dbReference>
<dbReference type="RefSeq" id="NP_390094.1">
    <property type="nucleotide sequence ID" value="NC_000964.3"/>
</dbReference>
<dbReference type="RefSeq" id="WP_003230725.1">
    <property type="nucleotide sequence ID" value="NZ_OZ025638.1"/>
</dbReference>
<dbReference type="SMR" id="P50844"/>
<dbReference type="FunCoup" id="P50844">
    <property type="interactions" value="8"/>
</dbReference>
<dbReference type="STRING" id="224308.BSU22120"/>
<dbReference type="PaxDb" id="224308-BSU22120"/>
<dbReference type="EnsemblBacteria" id="CAB14129">
    <property type="protein sequence ID" value="CAB14129"/>
    <property type="gene ID" value="BSU_22120"/>
</dbReference>
<dbReference type="GeneID" id="939063"/>
<dbReference type="KEGG" id="bsu:BSU22120"/>
<dbReference type="PATRIC" id="fig|224308.179.peg.2416"/>
<dbReference type="eggNOG" id="COG1609">
    <property type="taxonomic scope" value="Bacteria"/>
</dbReference>
<dbReference type="InParanoid" id="P50844"/>
<dbReference type="OrthoDB" id="1639518at2"/>
<dbReference type="PhylomeDB" id="P50844"/>
<dbReference type="BioCyc" id="BSUB:BSU22120-MONOMER"/>
<dbReference type="Proteomes" id="UP000001570">
    <property type="component" value="Chromosome"/>
</dbReference>
<dbReference type="GO" id="GO:0005524">
    <property type="term" value="F:ATP binding"/>
    <property type="evidence" value="ECO:0007669"/>
    <property type="project" value="InterPro"/>
</dbReference>
<dbReference type="GO" id="GO:0003910">
    <property type="term" value="F:DNA ligase (ATP) activity"/>
    <property type="evidence" value="ECO:0007669"/>
    <property type="project" value="InterPro"/>
</dbReference>
<dbReference type="GO" id="GO:0003700">
    <property type="term" value="F:DNA-binding transcription factor activity"/>
    <property type="evidence" value="ECO:0000318"/>
    <property type="project" value="GO_Central"/>
</dbReference>
<dbReference type="GO" id="GO:0000976">
    <property type="term" value="F:transcription cis-regulatory region binding"/>
    <property type="evidence" value="ECO:0000318"/>
    <property type="project" value="GO_Central"/>
</dbReference>
<dbReference type="GO" id="GO:0006310">
    <property type="term" value="P:DNA recombination"/>
    <property type="evidence" value="ECO:0007669"/>
    <property type="project" value="InterPro"/>
</dbReference>
<dbReference type="GO" id="GO:0006281">
    <property type="term" value="P:DNA repair"/>
    <property type="evidence" value="ECO:0007669"/>
    <property type="project" value="InterPro"/>
</dbReference>
<dbReference type="GO" id="GO:0006355">
    <property type="term" value="P:regulation of DNA-templated transcription"/>
    <property type="evidence" value="ECO:0000318"/>
    <property type="project" value="GO_Central"/>
</dbReference>
<dbReference type="CDD" id="cd01392">
    <property type="entry name" value="HTH_LacI"/>
    <property type="match status" value="1"/>
</dbReference>
<dbReference type="CDD" id="cd06283">
    <property type="entry name" value="PBP1_RegR_EndR_KdgR-like"/>
    <property type="match status" value="1"/>
</dbReference>
<dbReference type="Gene3D" id="3.40.50.2300">
    <property type="match status" value="2"/>
</dbReference>
<dbReference type="Gene3D" id="1.10.260.40">
    <property type="entry name" value="lambda repressor-like DNA-binding domains"/>
    <property type="match status" value="1"/>
</dbReference>
<dbReference type="InterPro" id="IPR001387">
    <property type="entry name" value="Cro/C1-type_HTH"/>
</dbReference>
<dbReference type="InterPro" id="IPR012310">
    <property type="entry name" value="DNA_ligase_ATP-dep_cent"/>
</dbReference>
<dbReference type="InterPro" id="IPR000843">
    <property type="entry name" value="HTH_LacI"/>
</dbReference>
<dbReference type="InterPro" id="IPR046335">
    <property type="entry name" value="LacI/GalR-like_sensor"/>
</dbReference>
<dbReference type="InterPro" id="IPR010982">
    <property type="entry name" value="Lambda_DNA-bd_dom_sf"/>
</dbReference>
<dbReference type="InterPro" id="IPR028082">
    <property type="entry name" value="Peripla_BP_I"/>
</dbReference>
<dbReference type="PANTHER" id="PTHR30146">
    <property type="entry name" value="LACI-RELATED TRANSCRIPTIONAL REPRESSOR"/>
    <property type="match status" value="1"/>
</dbReference>
<dbReference type="PANTHER" id="PTHR30146:SF145">
    <property type="entry name" value="RIBOSE OPERON REPRESSOR"/>
    <property type="match status" value="1"/>
</dbReference>
<dbReference type="Pfam" id="PF00356">
    <property type="entry name" value="LacI"/>
    <property type="match status" value="1"/>
</dbReference>
<dbReference type="Pfam" id="PF13377">
    <property type="entry name" value="Peripla_BP_3"/>
    <property type="match status" value="1"/>
</dbReference>
<dbReference type="PRINTS" id="PR00036">
    <property type="entry name" value="HTHLACI"/>
</dbReference>
<dbReference type="SMART" id="SM00354">
    <property type="entry name" value="HTH_LACI"/>
    <property type="match status" value="1"/>
</dbReference>
<dbReference type="SUPFAM" id="SSF47413">
    <property type="entry name" value="lambda repressor-like DNA-binding domains"/>
    <property type="match status" value="1"/>
</dbReference>
<dbReference type="SUPFAM" id="SSF53822">
    <property type="entry name" value="Periplasmic binding protein-like I"/>
    <property type="match status" value="1"/>
</dbReference>
<dbReference type="PROSITE" id="PS00356">
    <property type="entry name" value="HTH_LACI_1"/>
    <property type="match status" value="1"/>
</dbReference>
<dbReference type="PROSITE" id="PS50932">
    <property type="entry name" value="HTH_LACI_2"/>
    <property type="match status" value="1"/>
</dbReference>
<sequence length="339" mass="37858">MKKKTTGHTTIKDVAECAGVSKSTVSRYINGKIDAISPEKVKNIKKAIAELNYRPSKMAQGLKIKKSKLIGFVVADITNPFSVAAFRGVEEVCDQYGYSIMVCNTDNSPEKEREMLLKLEAHSVEGLILNATGENKDVLRAFAEQQIPTILIDRKLPDLKLDTVTTDNRWITKEILQKVYSKGYTDVALFTEPISSISPRAERAAVYQEMASVQNVNGLVRLHEIDVKDKEQLKAELRSFHKEMPEQKKAILALNGLIMLKIISCMEELGLRIPQDIGIAGFDDTEWYKLIGPGITTIAQPSHDMGRTAMERVLKRIEGDKGAPQTIELEAKVIMRKSL</sequence>
<gene>
    <name type="primary">kdgR</name>
    <name type="ordered locus">BSU22120</name>
</gene>